<accession>Q3K724</accession>
<evidence type="ECO:0000255" key="1">
    <source>
        <dbReference type="HAMAP-Rule" id="MF_00532"/>
    </source>
</evidence>
<evidence type="ECO:0000305" key="2"/>
<name>RS9_PSEPF</name>
<feature type="chain" id="PRO_1000051297" description="Small ribosomal subunit protein uS9">
    <location>
        <begin position="1"/>
        <end position="130"/>
    </location>
</feature>
<comment type="similarity">
    <text evidence="1">Belongs to the universal ribosomal protein uS9 family.</text>
</comment>
<sequence length="130" mass="14606">MSATQNYGTGRRKTATARVFLRPGTGNISINNRSLDTFFGRETARMVVRQPLELTETVEKFDIYVTVIGGGVSGQAGAIRHGITRALMDYDETLRSALRKAGFVTRDAREVERKKVGLRKARKRPQYSKR</sequence>
<proteinExistence type="inferred from homology"/>
<organism>
    <name type="scientific">Pseudomonas fluorescens (strain Pf0-1)</name>
    <dbReference type="NCBI Taxonomy" id="205922"/>
    <lineage>
        <taxon>Bacteria</taxon>
        <taxon>Pseudomonadati</taxon>
        <taxon>Pseudomonadota</taxon>
        <taxon>Gammaproteobacteria</taxon>
        <taxon>Pseudomonadales</taxon>
        <taxon>Pseudomonadaceae</taxon>
        <taxon>Pseudomonas</taxon>
    </lineage>
</organism>
<protein>
    <recommendedName>
        <fullName evidence="1">Small ribosomal subunit protein uS9</fullName>
    </recommendedName>
    <alternativeName>
        <fullName evidence="2">30S ribosomal protein S9</fullName>
    </alternativeName>
</protein>
<dbReference type="EMBL" id="CP000094">
    <property type="protein sequence ID" value="ABA76430.1"/>
    <property type="molecule type" value="Genomic_DNA"/>
</dbReference>
<dbReference type="RefSeq" id="WP_007956794.1">
    <property type="nucleotide sequence ID" value="NC_007492.2"/>
</dbReference>
<dbReference type="SMR" id="Q3K724"/>
<dbReference type="KEGG" id="pfo:Pfl01_4693"/>
<dbReference type="eggNOG" id="COG0103">
    <property type="taxonomic scope" value="Bacteria"/>
</dbReference>
<dbReference type="HOGENOM" id="CLU_046483_2_1_6"/>
<dbReference type="Proteomes" id="UP000002704">
    <property type="component" value="Chromosome"/>
</dbReference>
<dbReference type="GO" id="GO:0022627">
    <property type="term" value="C:cytosolic small ribosomal subunit"/>
    <property type="evidence" value="ECO:0007669"/>
    <property type="project" value="TreeGrafter"/>
</dbReference>
<dbReference type="GO" id="GO:0003723">
    <property type="term" value="F:RNA binding"/>
    <property type="evidence" value="ECO:0007669"/>
    <property type="project" value="TreeGrafter"/>
</dbReference>
<dbReference type="GO" id="GO:0003735">
    <property type="term" value="F:structural constituent of ribosome"/>
    <property type="evidence" value="ECO:0007669"/>
    <property type="project" value="InterPro"/>
</dbReference>
<dbReference type="GO" id="GO:0006412">
    <property type="term" value="P:translation"/>
    <property type="evidence" value="ECO:0007669"/>
    <property type="project" value="UniProtKB-UniRule"/>
</dbReference>
<dbReference type="FunFam" id="3.30.230.10:FF:000001">
    <property type="entry name" value="30S ribosomal protein S9"/>
    <property type="match status" value="1"/>
</dbReference>
<dbReference type="Gene3D" id="3.30.230.10">
    <property type="match status" value="1"/>
</dbReference>
<dbReference type="HAMAP" id="MF_00532_B">
    <property type="entry name" value="Ribosomal_uS9_B"/>
    <property type="match status" value="1"/>
</dbReference>
<dbReference type="InterPro" id="IPR020568">
    <property type="entry name" value="Ribosomal_Su5_D2-typ_SF"/>
</dbReference>
<dbReference type="InterPro" id="IPR000754">
    <property type="entry name" value="Ribosomal_uS9"/>
</dbReference>
<dbReference type="InterPro" id="IPR023035">
    <property type="entry name" value="Ribosomal_uS9_bac/plastid"/>
</dbReference>
<dbReference type="InterPro" id="IPR020574">
    <property type="entry name" value="Ribosomal_uS9_CS"/>
</dbReference>
<dbReference type="InterPro" id="IPR014721">
    <property type="entry name" value="Ribsml_uS5_D2-typ_fold_subgr"/>
</dbReference>
<dbReference type="NCBIfam" id="NF001099">
    <property type="entry name" value="PRK00132.1"/>
    <property type="match status" value="1"/>
</dbReference>
<dbReference type="PANTHER" id="PTHR21569">
    <property type="entry name" value="RIBOSOMAL PROTEIN S9"/>
    <property type="match status" value="1"/>
</dbReference>
<dbReference type="PANTHER" id="PTHR21569:SF1">
    <property type="entry name" value="SMALL RIBOSOMAL SUBUNIT PROTEIN US9M"/>
    <property type="match status" value="1"/>
</dbReference>
<dbReference type="Pfam" id="PF00380">
    <property type="entry name" value="Ribosomal_S9"/>
    <property type="match status" value="1"/>
</dbReference>
<dbReference type="SUPFAM" id="SSF54211">
    <property type="entry name" value="Ribosomal protein S5 domain 2-like"/>
    <property type="match status" value="1"/>
</dbReference>
<dbReference type="PROSITE" id="PS00360">
    <property type="entry name" value="RIBOSOMAL_S9"/>
    <property type="match status" value="1"/>
</dbReference>
<gene>
    <name evidence="1" type="primary">rpsI</name>
    <name type="ordered locus">Pfl01_4693</name>
</gene>
<reference key="1">
    <citation type="journal article" date="2009" name="Genome Biol.">
        <title>Genomic and genetic analyses of diversity and plant interactions of Pseudomonas fluorescens.</title>
        <authorList>
            <person name="Silby M.W."/>
            <person name="Cerdeno-Tarraga A.M."/>
            <person name="Vernikos G.S."/>
            <person name="Giddens S.R."/>
            <person name="Jackson R.W."/>
            <person name="Preston G.M."/>
            <person name="Zhang X.-X."/>
            <person name="Moon C.D."/>
            <person name="Gehrig S.M."/>
            <person name="Godfrey S.A.C."/>
            <person name="Knight C.G."/>
            <person name="Malone J.G."/>
            <person name="Robinson Z."/>
            <person name="Spiers A.J."/>
            <person name="Harris S."/>
            <person name="Challis G.L."/>
            <person name="Yaxley A.M."/>
            <person name="Harris D."/>
            <person name="Seeger K."/>
            <person name="Murphy L."/>
            <person name="Rutter S."/>
            <person name="Squares R."/>
            <person name="Quail M.A."/>
            <person name="Saunders E."/>
            <person name="Mavromatis K."/>
            <person name="Brettin T.S."/>
            <person name="Bentley S.D."/>
            <person name="Hothersall J."/>
            <person name="Stephens E."/>
            <person name="Thomas C.M."/>
            <person name="Parkhill J."/>
            <person name="Levy S.B."/>
            <person name="Rainey P.B."/>
            <person name="Thomson N.R."/>
        </authorList>
    </citation>
    <scope>NUCLEOTIDE SEQUENCE [LARGE SCALE GENOMIC DNA]</scope>
    <source>
        <strain>Pf0-1</strain>
    </source>
</reference>
<keyword id="KW-0687">Ribonucleoprotein</keyword>
<keyword id="KW-0689">Ribosomal protein</keyword>